<feature type="chain" id="PRO_0000211273" description="Translationally-controlled tumor protein homolog">
    <location>
        <begin position="1"/>
        <end position="172"/>
    </location>
</feature>
<feature type="domain" description="TCTP" evidence="2">
    <location>
        <begin position="1"/>
        <end position="172"/>
    </location>
</feature>
<feature type="modified residue" description="Phosphoserine; by PLK1" evidence="1">
    <location>
        <position position="46"/>
    </location>
</feature>
<gene>
    <name type="primary">TPT1</name>
</gene>
<evidence type="ECO:0000250" key="1"/>
<evidence type="ECO:0000255" key="2">
    <source>
        <dbReference type="PROSITE-ProRule" id="PRU01133"/>
    </source>
</evidence>
<name>TCTP_CHICK</name>
<organism>
    <name type="scientific">Gallus gallus</name>
    <name type="common">Chicken</name>
    <dbReference type="NCBI Taxonomy" id="9031"/>
    <lineage>
        <taxon>Eukaryota</taxon>
        <taxon>Metazoa</taxon>
        <taxon>Chordata</taxon>
        <taxon>Craniata</taxon>
        <taxon>Vertebrata</taxon>
        <taxon>Euteleostomi</taxon>
        <taxon>Archelosauria</taxon>
        <taxon>Archosauria</taxon>
        <taxon>Dinosauria</taxon>
        <taxon>Saurischia</taxon>
        <taxon>Theropoda</taxon>
        <taxon>Coelurosauria</taxon>
        <taxon>Aves</taxon>
        <taxon>Neognathae</taxon>
        <taxon>Galloanserae</taxon>
        <taxon>Galliformes</taxon>
        <taxon>Phasianidae</taxon>
        <taxon>Phasianinae</taxon>
        <taxon>Gallus</taxon>
    </lineage>
</organism>
<sequence length="172" mass="19530">MIIYRDCISQDEMFSDIYKIREVANGLCLEVEGKMVTRTEGQIDDSLIGGNASAEGPEGEGTEATVITGVDIVINHHLQETSFTKESYKKYIKDYMKAIKARLEEHKPERVKPFMTGAAEQIKHILANFKNYQFFVGENMNPDGMVALLDFREDGVTPYMIFFKDGLEIEKC</sequence>
<accession>P43347</accession>
<comment type="function">
    <text evidence="1">Involved in calcium binding and microtubule stabilization.</text>
</comment>
<comment type="subcellular location">
    <subcellularLocation>
        <location evidence="1">Cytoplasm</location>
    </subcellularLocation>
</comment>
<comment type="similarity">
    <text evidence="2">Belongs to the TCTP family.</text>
</comment>
<reference key="1">
    <citation type="submission" date="1995-04" db="EMBL/GenBank/DDBJ databases">
        <title>Cloning and nucleotide sequence of differentiation-related gene (pCHK23) from chick embryonic myoblasts:cDNA pCHK23 is homologous to translationally controlled protein p23 in mouse EAT cells.</title>
        <authorList>
            <person name="Kang B.-S."/>
            <person name="Jang S."/>
            <person name="Yoo B."/>
            <person name="Yang J."/>
        </authorList>
    </citation>
    <scope>NUCLEOTIDE SEQUENCE [MRNA]</scope>
    <source>
        <tissue>Myoblast</tissue>
    </source>
</reference>
<reference key="2">
    <citation type="submission" date="1993-12" db="EMBL/GenBank/DDBJ databases">
        <authorList>
            <person name="Sawada K."/>
            <person name="Agata K."/>
            <person name="Eguchi G."/>
        </authorList>
    </citation>
    <scope>NUCLEOTIDE SEQUENCE [MRNA]</scope>
    <source>
        <tissue>Lens</tissue>
    </source>
</reference>
<protein>
    <recommendedName>
        <fullName>Translationally-controlled tumor protein homolog</fullName>
        <shortName>TCTP</shortName>
    </recommendedName>
    <alternativeName>
        <fullName>p23</fullName>
    </alternativeName>
    <alternativeName>
        <fullName>pCHK23</fullName>
    </alternativeName>
</protein>
<dbReference type="EMBL" id="U25954">
    <property type="protein sequence ID" value="AAA67296.1"/>
    <property type="molecule type" value="mRNA"/>
</dbReference>
<dbReference type="EMBL" id="D26312">
    <property type="protein sequence ID" value="BAA05374.1"/>
    <property type="molecule type" value="mRNA"/>
</dbReference>
<dbReference type="PIR" id="A38960">
    <property type="entry name" value="A38960"/>
</dbReference>
<dbReference type="RefSeq" id="NP_990729.1">
    <property type="nucleotide sequence ID" value="NM_205398.2"/>
</dbReference>
<dbReference type="SMR" id="P43347"/>
<dbReference type="BioGRID" id="676616">
    <property type="interactions" value="1"/>
</dbReference>
<dbReference type="FunCoup" id="P43347">
    <property type="interactions" value="2174"/>
</dbReference>
<dbReference type="STRING" id="9031.ENSGALP00000042618"/>
<dbReference type="PaxDb" id="9031-ENSGALP00000042618"/>
<dbReference type="Ensembl" id="ENSGALT00010008298.1">
    <property type="protein sequence ID" value="ENSGALP00010004917.1"/>
    <property type="gene ID" value="ENSGALG00010003558.1"/>
</dbReference>
<dbReference type="GeneID" id="396363"/>
<dbReference type="KEGG" id="gga:396363"/>
<dbReference type="CTD" id="7178"/>
<dbReference type="VEuPathDB" id="HostDB:geneid_396363"/>
<dbReference type="eggNOG" id="KOG1727">
    <property type="taxonomic scope" value="Eukaryota"/>
</dbReference>
<dbReference type="GeneTree" id="ENSGT00390000006051"/>
<dbReference type="HOGENOM" id="CLU_095877_0_1_1"/>
<dbReference type="InParanoid" id="P43347"/>
<dbReference type="OMA" id="CAMITEG"/>
<dbReference type="OrthoDB" id="10248936at2759"/>
<dbReference type="PhylomeDB" id="P43347"/>
<dbReference type="TreeFam" id="TF300238"/>
<dbReference type="PRO" id="PR:P43347"/>
<dbReference type="Proteomes" id="UP000000539">
    <property type="component" value="Chromosome 1"/>
</dbReference>
<dbReference type="Bgee" id="ENSGALG00000028872">
    <property type="expression patterns" value="Expressed in muscle tissue and 13 other cell types or tissues"/>
</dbReference>
<dbReference type="GO" id="GO:0005737">
    <property type="term" value="C:cytoplasm"/>
    <property type="evidence" value="ECO:0000250"/>
    <property type="project" value="AgBase"/>
</dbReference>
<dbReference type="GO" id="GO:0005881">
    <property type="term" value="C:cytoplasmic microtubule"/>
    <property type="evidence" value="ECO:0000250"/>
    <property type="project" value="AgBase"/>
</dbReference>
<dbReference type="GO" id="GO:0005615">
    <property type="term" value="C:extracellular space"/>
    <property type="evidence" value="ECO:0000250"/>
    <property type="project" value="AgBase"/>
</dbReference>
<dbReference type="GO" id="GO:0005771">
    <property type="term" value="C:multivesicular body"/>
    <property type="evidence" value="ECO:0000250"/>
    <property type="project" value="AgBase"/>
</dbReference>
<dbReference type="GO" id="GO:0000922">
    <property type="term" value="C:spindle pole"/>
    <property type="evidence" value="ECO:0000250"/>
    <property type="project" value="UniProtKB"/>
</dbReference>
<dbReference type="GO" id="GO:0005509">
    <property type="term" value="F:calcium ion binding"/>
    <property type="evidence" value="ECO:0000250"/>
    <property type="project" value="AgBase"/>
</dbReference>
<dbReference type="FunFam" id="2.170.150.10:FF:000001">
    <property type="entry name" value="Tumor protein, translationally-controlled 1"/>
    <property type="match status" value="1"/>
</dbReference>
<dbReference type="Gene3D" id="2.170.150.10">
    <property type="entry name" value="Metal Binding Protein, Guanine Nucleotide Exchange Factor, Chain A"/>
    <property type="match status" value="1"/>
</dbReference>
<dbReference type="InterPro" id="IPR011057">
    <property type="entry name" value="Mss4-like_sf"/>
</dbReference>
<dbReference type="InterPro" id="IPR011323">
    <property type="entry name" value="Mss4/transl-control_tumour"/>
</dbReference>
<dbReference type="InterPro" id="IPR034737">
    <property type="entry name" value="TCTP"/>
</dbReference>
<dbReference type="InterPro" id="IPR018103">
    <property type="entry name" value="Translation_control_tumour_CS"/>
</dbReference>
<dbReference type="InterPro" id="IPR018105">
    <property type="entry name" value="Translational_control_tumour_p"/>
</dbReference>
<dbReference type="PANTHER" id="PTHR11991">
    <property type="entry name" value="TRANSLATIONALLY CONTROLLED TUMOR PROTEIN-RELATED"/>
    <property type="match status" value="1"/>
</dbReference>
<dbReference type="PANTHER" id="PTHR11991:SF0">
    <property type="entry name" value="TRANSLATIONALLY-CONTROLLED TUMOR PROTEIN"/>
    <property type="match status" value="1"/>
</dbReference>
<dbReference type="Pfam" id="PF00838">
    <property type="entry name" value="TCTP"/>
    <property type="match status" value="1"/>
</dbReference>
<dbReference type="PRINTS" id="PR01653">
    <property type="entry name" value="TCTPROTEIN"/>
</dbReference>
<dbReference type="SUPFAM" id="SSF51316">
    <property type="entry name" value="Mss4-like"/>
    <property type="match status" value="1"/>
</dbReference>
<dbReference type="PROSITE" id="PS01002">
    <property type="entry name" value="TCTP_1"/>
    <property type="match status" value="1"/>
</dbReference>
<dbReference type="PROSITE" id="PS01003">
    <property type="entry name" value="TCTP_2"/>
    <property type="match status" value="1"/>
</dbReference>
<dbReference type="PROSITE" id="PS51797">
    <property type="entry name" value="TCTP_3"/>
    <property type="match status" value="1"/>
</dbReference>
<proteinExistence type="evidence at transcript level"/>
<keyword id="KW-0106">Calcium</keyword>
<keyword id="KW-0963">Cytoplasm</keyword>
<keyword id="KW-0597">Phosphoprotein</keyword>
<keyword id="KW-1185">Reference proteome</keyword>